<feature type="chain" id="PRO_1000144433" description="Large ribosomal subunit protein bL17">
    <location>
        <begin position="1"/>
        <end position="116"/>
    </location>
</feature>
<gene>
    <name evidence="1" type="primary">rplQ</name>
    <name type="ordered locus">HPP12_1258</name>
</gene>
<reference key="1">
    <citation type="submission" date="2008-10" db="EMBL/GenBank/DDBJ databases">
        <title>The complete genome sequence of Helicobacter pylori strain P12.</title>
        <authorList>
            <person name="Fischer W."/>
            <person name="Windhager L."/>
            <person name="Karnholz A."/>
            <person name="Zeiller M."/>
            <person name="Zimmer R."/>
            <person name="Haas R."/>
        </authorList>
    </citation>
    <scope>NUCLEOTIDE SEQUENCE [LARGE SCALE GENOMIC DNA]</scope>
    <source>
        <strain>P12</strain>
    </source>
</reference>
<comment type="subunit">
    <text evidence="1">Part of the 50S ribosomal subunit. Contacts protein L32.</text>
</comment>
<comment type="similarity">
    <text evidence="1">Belongs to the bacterial ribosomal protein bL17 family.</text>
</comment>
<keyword id="KW-0687">Ribonucleoprotein</keyword>
<keyword id="KW-0689">Ribosomal protein</keyword>
<evidence type="ECO:0000255" key="1">
    <source>
        <dbReference type="HAMAP-Rule" id="MF_01368"/>
    </source>
</evidence>
<evidence type="ECO:0000305" key="2"/>
<accession>B6JND2</accession>
<organism>
    <name type="scientific">Helicobacter pylori (strain P12)</name>
    <dbReference type="NCBI Taxonomy" id="570508"/>
    <lineage>
        <taxon>Bacteria</taxon>
        <taxon>Pseudomonadati</taxon>
        <taxon>Campylobacterota</taxon>
        <taxon>Epsilonproteobacteria</taxon>
        <taxon>Campylobacterales</taxon>
        <taxon>Helicobacteraceae</taxon>
        <taxon>Helicobacter</taxon>
    </lineage>
</organism>
<proteinExistence type="inferred from homology"/>
<sequence>MRHKHGYRKLGRTSSHRKALLKNLAIALIEHNKIETGIYKAKELRSYIEKLTTAARVGDFNAHRHVFAYLQNKEATHKLVTEIAPKYAQRNGGYTRIQRTTFRRGDASTLATIEFV</sequence>
<name>RL17_HELP2</name>
<protein>
    <recommendedName>
        <fullName evidence="1">Large ribosomal subunit protein bL17</fullName>
    </recommendedName>
    <alternativeName>
        <fullName evidence="2">50S ribosomal protein L17</fullName>
    </alternativeName>
</protein>
<dbReference type="EMBL" id="CP001217">
    <property type="protein sequence ID" value="ACJ08410.1"/>
    <property type="molecule type" value="Genomic_DNA"/>
</dbReference>
<dbReference type="SMR" id="B6JND2"/>
<dbReference type="KEGG" id="hpp:HPP12_1258"/>
<dbReference type="HOGENOM" id="CLU_074407_2_0_7"/>
<dbReference type="Proteomes" id="UP000008198">
    <property type="component" value="Chromosome"/>
</dbReference>
<dbReference type="GO" id="GO:0022625">
    <property type="term" value="C:cytosolic large ribosomal subunit"/>
    <property type="evidence" value="ECO:0007669"/>
    <property type="project" value="TreeGrafter"/>
</dbReference>
<dbReference type="GO" id="GO:0003735">
    <property type="term" value="F:structural constituent of ribosome"/>
    <property type="evidence" value="ECO:0007669"/>
    <property type="project" value="InterPro"/>
</dbReference>
<dbReference type="GO" id="GO:0006412">
    <property type="term" value="P:translation"/>
    <property type="evidence" value="ECO:0007669"/>
    <property type="project" value="UniProtKB-UniRule"/>
</dbReference>
<dbReference type="FunFam" id="3.90.1030.10:FF:000003">
    <property type="entry name" value="50S ribosomal protein L17"/>
    <property type="match status" value="1"/>
</dbReference>
<dbReference type="Gene3D" id="3.90.1030.10">
    <property type="entry name" value="Ribosomal protein L17"/>
    <property type="match status" value="1"/>
</dbReference>
<dbReference type="HAMAP" id="MF_01368">
    <property type="entry name" value="Ribosomal_bL17"/>
    <property type="match status" value="1"/>
</dbReference>
<dbReference type="InterPro" id="IPR000456">
    <property type="entry name" value="Ribosomal_bL17"/>
</dbReference>
<dbReference type="InterPro" id="IPR047859">
    <property type="entry name" value="Ribosomal_bL17_CS"/>
</dbReference>
<dbReference type="InterPro" id="IPR036373">
    <property type="entry name" value="Ribosomal_bL17_sf"/>
</dbReference>
<dbReference type="NCBIfam" id="TIGR00059">
    <property type="entry name" value="L17"/>
    <property type="match status" value="1"/>
</dbReference>
<dbReference type="PANTHER" id="PTHR14413:SF16">
    <property type="entry name" value="LARGE RIBOSOMAL SUBUNIT PROTEIN BL17M"/>
    <property type="match status" value="1"/>
</dbReference>
<dbReference type="PANTHER" id="PTHR14413">
    <property type="entry name" value="RIBOSOMAL PROTEIN L17"/>
    <property type="match status" value="1"/>
</dbReference>
<dbReference type="Pfam" id="PF01196">
    <property type="entry name" value="Ribosomal_L17"/>
    <property type="match status" value="1"/>
</dbReference>
<dbReference type="SUPFAM" id="SSF64263">
    <property type="entry name" value="Prokaryotic ribosomal protein L17"/>
    <property type="match status" value="1"/>
</dbReference>
<dbReference type="PROSITE" id="PS01167">
    <property type="entry name" value="RIBOSOMAL_L17"/>
    <property type="match status" value="1"/>
</dbReference>